<gene>
    <name type="primary">nifD</name>
    <name type="ordered locus">MTBMA_c01490</name>
</gene>
<dbReference type="EC" id="1.18.6.1"/>
<dbReference type="EMBL" id="X87971">
    <property type="protein sequence ID" value="CAA61219.1"/>
    <property type="molecule type" value="Genomic_DNA"/>
</dbReference>
<dbReference type="EMBL" id="CP001710">
    <property type="protein sequence ID" value="ADL57758.1"/>
    <property type="molecule type" value="Genomic_DNA"/>
</dbReference>
<dbReference type="PIR" id="S63551">
    <property type="entry name" value="S63551"/>
</dbReference>
<dbReference type="RefSeq" id="WP_013294986.1">
    <property type="nucleotide sequence ID" value="NC_014408.1"/>
</dbReference>
<dbReference type="SMR" id="Q50788"/>
<dbReference type="STRING" id="79929.MTBMA_c01490"/>
<dbReference type="PaxDb" id="79929-MTBMA_c01490"/>
<dbReference type="GeneID" id="41326927"/>
<dbReference type="GeneID" id="9703854"/>
<dbReference type="KEGG" id="mmg:MTBMA_c01490"/>
<dbReference type="PATRIC" id="fig|79929.8.peg.145"/>
<dbReference type="HOGENOM" id="CLU_025876_1_0_2"/>
<dbReference type="OrthoDB" id="72973at2157"/>
<dbReference type="Proteomes" id="UP000000345">
    <property type="component" value="Chromosome"/>
</dbReference>
<dbReference type="GO" id="GO:0005524">
    <property type="term" value="F:ATP binding"/>
    <property type="evidence" value="ECO:0007669"/>
    <property type="project" value="UniProtKB-KW"/>
</dbReference>
<dbReference type="GO" id="GO:0051536">
    <property type="term" value="F:iron-sulfur cluster binding"/>
    <property type="evidence" value="ECO:0007669"/>
    <property type="project" value="UniProtKB-KW"/>
</dbReference>
<dbReference type="GO" id="GO:0046872">
    <property type="term" value="F:metal ion binding"/>
    <property type="evidence" value="ECO:0007669"/>
    <property type="project" value="UniProtKB-KW"/>
</dbReference>
<dbReference type="GO" id="GO:0016163">
    <property type="term" value="F:nitrogenase activity"/>
    <property type="evidence" value="ECO:0007669"/>
    <property type="project" value="UniProtKB-EC"/>
</dbReference>
<dbReference type="GO" id="GO:0009399">
    <property type="term" value="P:nitrogen fixation"/>
    <property type="evidence" value="ECO:0007669"/>
    <property type="project" value="UniProtKB-KW"/>
</dbReference>
<dbReference type="Gene3D" id="3.40.50.12380">
    <property type="entry name" value="Nitrogenase MoFe cofactor biosynthesis protein NifE, C-terminal"/>
    <property type="match status" value="1"/>
</dbReference>
<dbReference type="Gene3D" id="3.40.50.1980">
    <property type="entry name" value="Nitrogenase molybdenum iron protein domain"/>
    <property type="match status" value="1"/>
</dbReference>
<dbReference type="InterPro" id="IPR000510">
    <property type="entry name" value="Nase/OxRdtase_comp1"/>
</dbReference>
<dbReference type="InterPro" id="IPR005974">
    <property type="entry name" value="Nase_asu"/>
</dbReference>
<dbReference type="InterPro" id="IPR010143">
    <property type="entry name" value="Nase_comp1_asu"/>
</dbReference>
<dbReference type="InterPro" id="IPR000318">
    <property type="entry name" value="Nase_comp1_CS"/>
</dbReference>
<dbReference type="NCBIfam" id="TIGR01284">
    <property type="entry name" value="alt_nitrog_alph"/>
    <property type="match status" value="1"/>
</dbReference>
<dbReference type="NCBIfam" id="TIGR01862">
    <property type="entry name" value="N2-ase-Ialpha"/>
    <property type="match status" value="1"/>
</dbReference>
<dbReference type="PANTHER" id="PTHR43457">
    <property type="entry name" value="NITROGENASE MOLYBDENUM-IRON PROTEIN ALPHA CHAIN"/>
    <property type="match status" value="1"/>
</dbReference>
<dbReference type="PANTHER" id="PTHR43457:SF1">
    <property type="entry name" value="NITROGENASE MOLYBDENUM-IRON PROTEIN ALPHA CHAIN"/>
    <property type="match status" value="1"/>
</dbReference>
<dbReference type="Pfam" id="PF00148">
    <property type="entry name" value="Oxidored_nitro"/>
    <property type="match status" value="1"/>
</dbReference>
<dbReference type="SUPFAM" id="SSF53807">
    <property type="entry name" value="Helical backbone' metal receptor"/>
    <property type="match status" value="1"/>
</dbReference>
<dbReference type="PROSITE" id="PS00090">
    <property type="entry name" value="NITROGENASE_1_2"/>
    <property type="match status" value="1"/>
</dbReference>
<comment type="function">
    <text>This molybdenum-iron protein is part of the nitrogenase complex that catalyzes the key enzymatic reactions in nitrogen fixation.</text>
</comment>
<comment type="catalytic activity">
    <reaction>
        <text>N2 + 8 reduced [2Fe-2S]-[ferredoxin] + 16 ATP + 16 H2O = H2 + 8 oxidized [2Fe-2S]-[ferredoxin] + 2 NH4(+) + 16 ADP + 16 phosphate + 6 H(+)</text>
        <dbReference type="Rhea" id="RHEA:21448"/>
        <dbReference type="Rhea" id="RHEA-COMP:10000"/>
        <dbReference type="Rhea" id="RHEA-COMP:10001"/>
        <dbReference type="ChEBI" id="CHEBI:15377"/>
        <dbReference type="ChEBI" id="CHEBI:15378"/>
        <dbReference type="ChEBI" id="CHEBI:17997"/>
        <dbReference type="ChEBI" id="CHEBI:18276"/>
        <dbReference type="ChEBI" id="CHEBI:28938"/>
        <dbReference type="ChEBI" id="CHEBI:30616"/>
        <dbReference type="ChEBI" id="CHEBI:33737"/>
        <dbReference type="ChEBI" id="CHEBI:33738"/>
        <dbReference type="ChEBI" id="CHEBI:43474"/>
        <dbReference type="ChEBI" id="CHEBI:456216"/>
        <dbReference type="EC" id="1.18.6.1"/>
    </reaction>
</comment>
<comment type="cofactor">
    <cofactor evidence="1">
        <name>[8Fe-7S] cluster</name>
        <dbReference type="ChEBI" id="CHEBI:21143"/>
    </cofactor>
    <text evidence="1">Binds 1 [8Fe-7S] cluster per heterodimer.</text>
</comment>
<comment type="cofactor">
    <cofactor evidence="1">
        <name>[7Fe-Mo-9S-C-homocitryl] cluster</name>
        <dbReference type="ChEBI" id="CHEBI:30409"/>
    </cofactor>
    <text evidence="1">Binds 1 [7Fe-Mo-9S-C-homocitryl] cluster per subunit.</text>
</comment>
<comment type="subunit">
    <text>Tetramer of two alpha and two beta chains. Forms complex with the iron protein (nitrogenase component 2).</text>
</comment>
<comment type="similarity">
    <text evidence="2">Belongs to the NifD/NifK/NifE/NifN family.</text>
</comment>
<name>NIFD_METTM</name>
<reference key="1">
    <citation type="submission" date="1997-02" db="EMBL/GenBank/DDBJ databases">
        <authorList>
            <person name="Hochheimer A."/>
        </authorList>
    </citation>
    <scope>NUCLEOTIDE SEQUENCE [GENOMIC DNA]</scope>
    <source>
        <strain>ATCC BAA-927 / DSM 2133 / JCM 14651 / NBRC 100331 / OCM 82 / Marburg</strain>
    </source>
</reference>
<reference key="2">
    <citation type="journal article" date="2010" name="J. Bacteriol.">
        <title>Complete genome sequence of Methanothermobacter marburgensis, a methanoarchaeon model organism.</title>
        <authorList>
            <person name="Liesegang H."/>
            <person name="Kaster A.K."/>
            <person name="Wiezer A."/>
            <person name="Goenrich M."/>
            <person name="Wollherr A."/>
            <person name="Seedorf H."/>
            <person name="Gottschalk G."/>
            <person name="Thauer R.K."/>
        </authorList>
    </citation>
    <scope>NUCLEOTIDE SEQUENCE [LARGE SCALE GENOMIC DNA]</scope>
    <source>
        <strain>ATCC BAA-927 / DSM 2133 / JCM 14651 / NBRC 100331 / OCM 82 / Marburg</strain>
    </source>
</reference>
<reference key="3">
    <citation type="journal article" date="1995" name="Eur. J. Biochem.">
        <title>The tungsten formylmethanofuran dehydrogenase from Methanobacterium thermoautotrophicum contains sequence motifs characteristic for enzymes containing molybdopterin dinucleotide.</title>
        <authorList>
            <person name="Hochheimer A."/>
            <person name="Schmitz R.A."/>
            <person name="Thauer R.K."/>
            <person name="Hedderich R."/>
        </authorList>
    </citation>
    <scope>NUCLEOTIDE SEQUENCE [GENOMIC DNA] OF 1-220</scope>
    <source>
        <strain>ATCC BAA-927 / DSM 2133 / JCM 14651 / NBRC 100331 / OCM 82 / Marburg</strain>
    </source>
</reference>
<proteinExistence type="inferred from homology"/>
<protein>
    <recommendedName>
        <fullName>Nitrogenase molybdenum-iron protein alpha chain</fullName>
        <ecNumber>1.18.6.1</ecNumber>
    </recommendedName>
    <alternativeName>
        <fullName>Dinitrogenase</fullName>
    </alternativeName>
    <alternativeName>
        <fullName>Nitrogenase component I</fullName>
    </alternativeName>
</protein>
<accession>Q50788</accession>
<accession>D9PU60</accession>
<accession>P97185</accession>
<sequence length="470" mass="53057">MPFELFGVDAEIPDRKKHIYVKKQGDPEGDIPACNTTTIPGCMTERGCAFAGAKGVITGAIKDALHVIHSPVGCTAYGYGTKRYPTSQEMPDGSMFPIEKFNLKYITGTDLSESDVVFGGMDKLKRCILEAVREFPEANAVYTYATCTTGLIGDDIDAISREVSEEIGKDVVAINAPGFAGPTQSKGHQVANYTLFEDLVGTAEPPRTTEYDVNLIGEYNIDGDLWVLKKYFEEMGINVLSTFTGDCCHDEIKWMHRAKLSLVRCQRSANYIAKLLEERYGVPYMKVDFFGIEYCRKNLMAIGEYFGIPERAERVIEDRMKKIGPEIQYFKDKLRGKRVWVFSGGPKNWHLPRPLEDELGMEVVAVSTMFEHEDGYEKIKKRVREGTVIVDDPNSLELEEIIEKYRPDIILSGIKEKYLAHKLGVPCILIHSYENGPYIGFEGFLNLARDMYAAIYNPVWDLLEFEEDVN</sequence>
<feature type="chain" id="PRO_0000153074" description="Nitrogenase molybdenum-iron protein alpha chain">
    <location>
        <begin position="1"/>
        <end position="470"/>
    </location>
</feature>
<feature type="binding site" evidence="1">
    <location>
        <position position="48"/>
    </location>
    <ligand>
        <name>[8Fe-7S] cluster</name>
        <dbReference type="ChEBI" id="CHEBI:21143"/>
        <note>ligand shared with beta chain</note>
    </ligand>
</feature>
<feature type="binding site" evidence="1">
    <location>
        <position position="74"/>
    </location>
    <ligand>
        <name>[8Fe-7S] cluster</name>
        <dbReference type="ChEBI" id="CHEBI:21143"/>
        <note>ligand shared with beta chain</note>
    </ligand>
</feature>
<feature type="binding site" evidence="1">
    <location>
        <position position="147"/>
    </location>
    <ligand>
        <name>[8Fe-7S] cluster</name>
        <dbReference type="ChEBI" id="CHEBI:21143"/>
        <note>ligand shared with beta chain</note>
    </ligand>
</feature>
<feature type="binding site" evidence="1">
    <location>
        <position position="265"/>
    </location>
    <ligand>
        <name>[7Fe-Mo-9S-C-homocitryl] cluster</name>
        <dbReference type="ChEBI" id="CHEBI:30409"/>
    </ligand>
</feature>
<feature type="binding site" evidence="1">
    <location>
        <position position="431"/>
    </location>
    <ligand>
        <name>[7Fe-Mo-9S-C-homocitryl] cluster</name>
        <dbReference type="ChEBI" id="CHEBI:30409"/>
    </ligand>
</feature>
<feature type="sequence conflict" description="In Ref. 1; CAA61219." evidence="2" ref="1">
    <original>N</original>
    <variation>I</variation>
    <location>
        <position position="348"/>
    </location>
</feature>
<organism>
    <name type="scientific">Methanothermobacter marburgensis (strain ATCC BAA-927 / DSM 2133 / JCM 14651 / NBRC 100331 / OCM 82 / Marburg)</name>
    <name type="common">Methanobacterium thermoautotrophicum</name>
    <dbReference type="NCBI Taxonomy" id="79929"/>
    <lineage>
        <taxon>Archaea</taxon>
        <taxon>Methanobacteriati</taxon>
        <taxon>Methanobacteriota</taxon>
        <taxon>Methanomada group</taxon>
        <taxon>Methanobacteria</taxon>
        <taxon>Methanobacteriales</taxon>
        <taxon>Methanobacteriaceae</taxon>
        <taxon>Methanothermobacter</taxon>
    </lineage>
</organism>
<keyword id="KW-0067">ATP-binding</keyword>
<keyword id="KW-0408">Iron</keyword>
<keyword id="KW-0411">Iron-sulfur</keyword>
<keyword id="KW-0479">Metal-binding</keyword>
<keyword id="KW-0500">Molybdenum</keyword>
<keyword id="KW-0535">Nitrogen fixation</keyword>
<keyword id="KW-0547">Nucleotide-binding</keyword>
<keyword id="KW-0560">Oxidoreductase</keyword>
<evidence type="ECO:0000250" key="1"/>
<evidence type="ECO:0000305" key="2"/>